<proteinExistence type="evidence at transcript level"/>
<evidence type="ECO:0000255" key="1"/>
<evidence type="ECO:0000255" key="2">
    <source>
        <dbReference type="PROSITE-ProRule" id="PRU01110"/>
    </source>
</evidence>
<evidence type="ECO:0000256" key="3">
    <source>
        <dbReference type="SAM" id="MobiDB-lite"/>
    </source>
</evidence>
<evidence type="ECO:0000269" key="4">
    <source>
    </source>
</evidence>
<evidence type="ECO:0000303" key="5">
    <source>
    </source>
</evidence>
<evidence type="ECO:0000305" key="6"/>
<evidence type="ECO:0000305" key="7">
    <source>
    </source>
</evidence>
<evidence type="ECO:0000312" key="8">
    <source>
        <dbReference type="Araport" id="AT4G14760"/>
    </source>
</evidence>
<evidence type="ECO:0000312" key="9">
    <source>
        <dbReference type="EMBL" id="CAB10255.1"/>
    </source>
</evidence>
<evidence type="ECO:0000312" key="10">
    <source>
        <dbReference type="Proteomes" id="UP000006548"/>
    </source>
</evidence>
<accession>F4JIF4</accession>
<accession>O23332</accession>
<name>NET1B_ARATH</name>
<comment type="function">
    <text evidence="7">Plant-specific actin binding protein. May be part of a membrane-cytoskeletal adapter complex.</text>
</comment>
<comment type="tissue specificity">
    <text evidence="4">Expressed in root meristems and at very low levels throughout mature vasculature.</text>
</comment>
<comment type="disruption phenotype">
    <text evidence="4">No visible phenotype, due to the redundancy with NET1A. Net1a and net1b double mutant shows a significant acceleration in root-cell expansion.</text>
</comment>
<comment type="similarity">
    <text evidence="6">Belongs to the NET family.</text>
</comment>
<comment type="sequence caution" evidence="6">
    <conflict type="erroneous gene model prediction">
        <sequence resource="EMBL-CDS" id="CAB10255"/>
    </conflict>
</comment>
<comment type="sequence caution" evidence="6">
    <conflict type="erroneous gene model prediction">
        <sequence resource="EMBL-CDS" id="CAB78518"/>
    </conflict>
</comment>
<organism evidence="10">
    <name type="scientific">Arabidopsis thaliana</name>
    <name type="common">Mouse-ear cress</name>
    <dbReference type="NCBI Taxonomy" id="3702"/>
    <lineage>
        <taxon>Eukaryota</taxon>
        <taxon>Viridiplantae</taxon>
        <taxon>Streptophyta</taxon>
        <taxon>Embryophyta</taxon>
        <taxon>Tracheophyta</taxon>
        <taxon>Spermatophyta</taxon>
        <taxon>Magnoliopsida</taxon>
        <taxon>eudicotyledons</taxon>
        <taxon>Gunneridae</taxon>
        <taxon>Pentapetalae</taxon>
        <taxon>rosids</taxon>
        <taxon>malvids</taxon>
        <taxon>Brassicales</taxon>
        <taxon>Brassicaceae</taxon>
        <taxon>Camelineae</taxon>
        <taxon>Arabidopsis</taxon>
    </lineage>
</organism>
<reference key="1">
    <citation type="journal article" date="1998" name="Nature">
        <title>Analysis of 1.9 Mb of contiguous sequence from chromosome 4 of Arabidopsis thaliana.</title>
        <authorList>
            <person name="Bevan M."/>
            <person name="Bancroft I."/>
            <person name="Bent E."/>
            <person name="Love K."/>
            <person name="Goodman H.M."/>
            <person name="Dean C."/>
            <person name="Bergkamp R."/>
            <person name="Dirkse W."/>
            <person name="van Staveren M."/>
            <person name="Stiekema W."/>
            <person name="Drost L."/>
            <person name="Ridley P."/>
            <person name="Hudson S.-A."/>
            <person name="Patel K."/>
            <person name="Murphy G."/>
            <person name="Piffanelli P."/>
            <person name="Wedler H."/>
            <person name="Wedler E."/>
            <person name="Wambutt R."/>
            <person name="Weitzenegger T."/>
            <person name="Pohl T."/>
            <person name="Terryn N."/>
            <person name="Gielen J."/>
            <person name="Villarroel R."/>
            <person name="De Clercq R."/>
            <person name="van Montagu M."/>
            <person name="Lecharny A."/>
            <person name="Aubourg S."/>
            <person name="Gy I."/>
            <person name="Kreis M."/>
            <person name="Lao N."/>
            <person name="Kavanagh T."/>
            <person name="Hempel S."/>
            <person name="Kotter P."/>
            <person name="Entian K.-D."/>
            <person name="Rieger M."/>
            <person name="Schaefer M."/>
            <person name="Funk B."/>
            <person name="Mueller-Auer S."/>
            <person name="Silvey M."/>
            <person name="James R."/>
            <person name="Monfort A."/>
            <person name="Pons A."/>
            <person name="Puigdomenech P."/>
            <person name="Douka A."/>
            <person name="Voukelatou E."/>
            <person name="Milioni D."/>
            <person name="Hatzopoulos P."/>
            <person name="Piravandi E."/>
            <person name="Obermaier B."/>
            <person name="Hilbert H."/>
            <person name="Duesterhoeft A."/>
            <person name="Moores T."/>
            <person name="Jones J.D.G."/>
            <person name="Eneva T."/>
            <person name="Palme K."/>
            <person name="Benes V."/>
            <person name="Rechmann S."/>
            <person name="Ansorge W."/>
            <person name="Cooke R."/>
            <person name="Berger C."/>
            <person name="Delseny M."/>
            <person name="Voet M."/>
            <person name="Volckaert G."/>
            <person name="Mewes H.-W."/>
            <person name="Klosterman S."/>
            <person name="Schueller C."/>
            <person name="Chalwatzis N."/>
        </authorList>
    </citation>
    <scope>NUCLEOTIDE SEQUENCE [LARGE SCALE GENOMIC DNA]</scope>
    <source>
        <strain>cv. Columbia</strain>
    </source>
</reference>
<reference key="2">
    <citation type="journal article" date="1999" name="Nature">
        <title>Sequence and analysis of chromosome 4 of the plant Arabidopsis thaliana.</title>
        <authorList>
            <person name="Mayer K.F.X."/>
            <person name="Schueller C."/>
            <person name="Wambutt R."/>
            <person name="Murphy G."/>
            <person name="Volckaert G."/>
            <person name="Pohl T."/>
            <person name="Duesterhoeft A."/>
            <person name="Stiekema W."/>
            <person name="Entian K.-D."/>
            <person name="Terryn N."/>
            <person name="Harris B."/>
            <person name="Ansorge W."/>
            <person name="Brandt P."/>
            <person name="Grivell L.A."/>
            <person name="Rieger M."/>
            <person name="Weichselgartner M."/>
            <person name="de Simone V."/>
            <person name="Obermaier B."/>
            <person name="Mache R."/>
            <person name="Mueller M."/>
            <person name="Kreis M."/>
            <person name="Delseny M."/>
            <person name="Puigdomenech P."/>
            <person name="Watson M."/>
            <person name="Schmidtheini T."/>
            <person name="Reichert B."/>
            <person name="Portetelle D."/>
            <person name="Perez-Alonso M."/>
            <person name="Boutry M."/>
            <person name="Bancroft I."/>
            <person name="Vos P."/>
            <person name="Hoheisel J."/>
            <person name="Zimmermann W."/>
            <person name="Wedler H."/>
            <person name="Ridley P."/>
            <person name="Langham S.-A."/>
            <person name="McCullagh B."/>
            <person name="Bilham L."/>
            <person name="Robben J."/>
            <person name="van der Schueren J."/>
            <person name="Grymonprez B."/>
            <person name="Chuang Y.-J."/>
            <person name="Vandenbussche F."/>
            <person name="Braeken M."/>
            <person name="Weltjens I."/>
            <person name="Voet M."/>
            <person name="Bastiaens I."/>
            <person name="Aert R."/>
            <person name="Defoor E."/>
            <person name="Weitzenegger T."/>
            <person name="Bothe G."/>
            <person name="Ramsperger U."/>
            <person name="Hilbert H."/>
            <person name="Braun M."/>
            <person name="Holzer E."/>
            <person name="Brandt A."/>
            <person name="Peters S."/>
            <person name="van Staveren M."/>
            <person name="Dirkse W."/>
            <person name="Mooijman P."/>
            <person name="Klein Lankhorst R."/>
            <person name="Rose M."/>
            <person name="Hauf J."/>
            <person name="Koetter P."/>
            <person name="Berneiser S."/>
            <person name="Hempel S."/>
            <person name="Feldpausch M."/>
            <person name="Lamberth S."/>
            <person name="Van den Daele H."/>
            <person name="De Keyser A."/>
            <person name="Buysshaert C."/>
            <person name="Gielen J."/>
            <person name="Villarroel R."/>
            <person name="De Clercq R."/>
            <person name="van Montagu M."/>
            <person name="Rogers J."/>
            <person name="Cronin A."/>
            <person name="Quail M.A."/>
            <person name="Bray-Allen S."/>
            <person name="Clark L."/>
            <person name="Doggett J."/>
            <person name="Hall S."/>
            <person name="Kay M."/>
            <person name="Lennard N."/>
            <person name="McLay K."/>
            <person name="Mayes R."/>
            <person name="Pettett A."/>
            <person name="Rajandream M.A."/>
            <person name="Lyne M."/>
            <person name="Benes V."/>
            <person name="Rechmann S."/>
            <person name="Borkova D."/>
            <person name="Bloecker H."/>
            <person name="Scharfe M."/>
            <person name="Grimm M."/>
            <person name="Loehnert T.-H."/>
            <person name="Dose S."/>
            <person name="de Haan M."/>
            <person name="Maarse A.C."/>
            <person name="Schaefer M."/>
            <person name="Mueller-Auer S."/>
            <person name="Gabel C."/>
            <person name="Fuchs M."/>
            <person name="Fartmann B."/>
            <person name="Granderath K."/>
            <person name="Dauner D."/>
            <person name="Herzl A."/>
            <person name="Neumann S."/>
            <person name="Argiriou A."/>
            <person name="Vitale D."/>
            <person name="Liguori R."/>
            <person name="Piravandi E."/>
            <person name="Massenet O."/>
            <person name="Quigley F."/>
            <person name="Clabauld G."/>
            <person name="Muendlein A."/>
            <person name="Felber R."/>
            <person name="Schnabl S."/>
            <person name="Hiller R."/>
            <person name="Schmidt W."/>
            <person name="Lecharny A."/>
            <person name="Aubourg S."/>
            <person name="Chefdor F."/>
            <person name="Cooke R."/>
            <person name="Berger C."/>
            <person name="Monfort A."/>
            <person name="Casacuberta E."/>
            <person name="Gibbons T."/>
            <person name="Weber N."/>
            <person name="Vandenbol M."/>
            <person name="Bargues M."/>
            <person name="Terol J."/>
            <person name="Torres A."/>
            <person name="Perez-Perez A."/>
            <person name="Purnelle B."/>
            <person name="Bent E."/>
            <person name="Johnson S."/>
            <person name="Tacon D."/>
            <person name="Jesse T."/>
            <person name="Heijnen L."/>
            <person name="Schwarz S."/>
            <person name="Scholler P."/>
            <person name="Heber S."/>
            <person name="Francs P."/>
            <person name="Bielke C."/>
            <person name="Frishman D."/>
            <person name="Haase D."/>
            <person name="Lemcke K."/>
            <person name="Mewes H.-W."/>
            <person name="Stocker S."/>
            <person name="Zaccaria P."/>
            <person name="Bevan M."/>
            <person name="Wilson R.K."/>
            <person name="de la Bastide M."/>
            <person name="Habermann K."/>
            <person name="Parnell L."/>
            <person name="Dedhia N."/>
            <person name="Gnoj L."/>
            <person name="Schutz K."/>
            <person name="Huang E."/>
            <person name="Spiegel L."/>
            <person name="Sekhon M."/>
            <person name="Murray J."/>
            <person name="Sheet P."/>
            <person name="Cordes M."/>
            <person name="Abu-Threideh J."/>
            <person name="Stoneking T."/>
            <person name="Kalicki J."/>
            <person name="Graves T."/>
            <person name="Harmon G."/>
            <person name="Edwards J."/>
            <person name="Latreille P."/>
            <person name="Courtney L."/>
            <person name="Cloud J."/>
            <person name="Abbott A."/>
            <person name="Scott K."/>
            <person name="Johnson D."/>
            <person name="Minx P."/>
            <person name="Bentley D."/>
            <person name="Fulton B."/>
            <person name="Miller N."/>
            <person name="Greco T."/>
            <person name="Kemp K."/>
            <person name="Kramer J."/>
            <person name="Fulton L."/>
            <person name="Mardis E."/>
            <person name="Dante M."/>
            <person name="Pepin K."/>
            <person name="Hillier L.W."/>
            <person name="Nelson J."/>
            <person name="Spieth J."/>
            <person name="Ryan E."/>
            <person name="Andrews S."/>
            <person name="Geisel C."/>
            <person name="Layman D."/>
            <person name="Du H."/>
            <person name="Ali J."/>
            <person name="Berghoff A."/>
            <person name="Jones K."/>
            <person name="Drone K."/>
            <person name="Cotton M."/>
            <person name="Joshu C."/>
            <person name="Antonoiu B."/>
            <person name="Zidanic M."/>
            <person name="Strong C."/>
            <person name="Sun H."/>
            <person name="Lamar B."/>
            <person name="Yordan C."/>
            <person name="Ma P."/>
            <person name="Zhong J."/>
            <person name="Preston R."/>
            <person name="Vil D."/>
            <person name="Shekher M."/>
            <person name="Matero A."/>
            <person name="Shah R."/>
            <person name="Swaby I.K."/>
            <person name="O'Shaughnessy A."/>
            <person name="Rodriguez M."/>
            <person name="Hoffman J."/>
            <person name="Till S."/>
            <person name="Granat S."/>
            <person name="Shohdy N."/>
            <person name="Hasegawa A."/>
            <person name="Hameed A."/>
            <person name="Lodhi M."/>
            <person name="Johnson A."/>
            <person name="Chen E."/>
            <person name="Marra M.A."/>
            <person name="Martienssen R."/>
            <person name="McCombie W.R."/>
        </authorList>
    </citation>
    <scope>NUCLEOTIDE SEQUENCE [LARGE SCALE GENOMIC DNA]</scope>
    <source>
        <strain>cv. Columbia</strain>
    </source>
</reference>
<reference key="3">
    <citation type="journal article" date="2017" name="Plant J.">
        <title>Araport11: a complete reannotation of the Arabidopsis thaliana reference genome.</title>
        <authorList>
            <person name="Cheng C.Y."/>
            <person name="Krishnakumar V."/>
            <person name="Chan A.P."/>
            <person name="Thibaud-Nissen F."/>
            <person name="Schobel S."/>
            <person name="Town C.D."/>
        </authorList>
    </citation>
    <scope>GENOME REANNOTATION</scope>
    <source>
        <strain>cv. Columbia</strain>
    </source>
</reference>
<reference key="4">
    <citation type="journal article" date="2012" name="Curr. Biol.">
        <title>A superfamily of actin-binding proteins at the actin-membrane nexus of higher plants.</title>
        <authorList>
            <person name="Deeks M.J."/>
            <person name="Calcutt J.R."/>
            <person name="Ingle E.K."/>
            <person name="Hawkins T.J."/>
            <person name="Chapman S."/>
            <person name="Richardson A.C."/>
            <person name="Mentlak D.A."/>
            <person name="Dixon M.R."/>
            <person name="Cartwright F."/>
            <person name="Smertenko A.P."/>
            <person name="Oparka K."/>
            <person name="Hussey P.J."/>
        </authorList>
    </citation>
    <scope>DISRUPTION PHENOTYPE</scope>
    <scope>TISSUE SPECIFICITY</scope>
    <scope>GENE FAMILY</scope>
    <scope>NOMENCLATURE</scope>
</reference>
<reference key="5">
    <citation type="journal article" date="2014" name="Front. Plant Sci.">
        <title>The evolution of the actin binding NET superfamily.</title>
        <authorList>
            <person name="Hawkins T.J."/>
            <person name="Deeks M.J."/>
            <person name="Wang P."/>
            <person name="Hussey P.J."/>
        </authorList>
    </citation>
    <scope>GENE FAMILY</scope>
</reference>
<feature type="chain" id="PRO_0000431850" description="Protein NETWORKED 1B">
    <location>
        <begin position="1"/>
        <end position="1710"/>
    </location>
</feature>
<feature type="domain" description="NAB" evidence="2">
    <location>
        <begin position="13"/>
        <end position="92"/>
    </location>
</feature>
<feature type="region of interest" description="Disordered" evidence="3">
    <location>
        <begin position="113"/>
        <end position="159"/>
    </location>
</feature>
<feature type="region of interest" description="Disordered" evidence="3">
    <location>
        <begin position="1409"/>
        <end position="1448"/>
    </location>
</feature>
<feature type="coiled-coil region" evidence="1">
    <location>
        <begin position="152"/>
        <end position="446"/>
    </location>
</feature>
<feature type="coiled-coil region" evidence="1">
    <location>
        <begin position="474"/>
        <end position="546"/>
    </location>
</feature>
<feature type="coiled-coil region" evidence="1">
    <location>
        <begin position="579"/>
        <end position="883"/>
    </location>
</feature>
<feature type="coiled-coil region" evidence="1">
    <location>
        <begin position="974"/>
        <end position="1021"/>
    </location>
</feature>
<feature type="coiled-coil region" evidence="1">
    <location>
        <begin position="1095"/>
        <end position="1259"/>
    </location>
</feature>
<feature type="coiled-coil region" evidence="1">
    <location>
        <begin position="1285"/>
        <end position="1336"/>
    </location>
</feature>
<feature type="coiled-coil region" evidence="1">
    <location>
        <begin position="1559"/>
        <end position="1665"/>
    </location>
</feature>
<feature type="compositionally biased region" description="Basic and acidic residues" evidence="3">
    <location>
        <begin position="122"/>
        <end position="137"/>
    </location>
</feature>
<feature type="compositionally biased region" description="Basic and acidic residues" evidence="3">
    <location>
        <begin position="150"/>
        <end position="159"/>
    </location>
</feature>
<protein>
    <recommendedName>
        <fullName evidence="5">Protein NETWORKED 1B</fullName>
    </recommendedName>
</protein>
<dbReference type="EMBL" id="Z97337">
    <property type="protein sequence ID" value="CAB10255.1"/>
    <property type="status" value="ALT_SEQ"/>
    <property type="molecule type" value="Genomic_DNA"/>
</dbReference>
<dbReference type="EMBL" id="AL161539">
    <property type="protein sequence ID" value="CAB78518.1"/>
    <property type="status" value="ALT_SEQ"/>
    <property type="molecule type" value="Genomic_DNA"/>
</dbReference>
<dbReference type="EMBL" id="CP002687">
    <property type="protein sequence ID" value="AEE83495.1"/>
    <property type="molecule type" value="Genomic_DNA"/>
</dbReference>
<dbReference type="EMBL" id="CP002687">
    <property type="protein sequence ID" value="ANM67769.1"/>
    <property type="molecule type" value="Genomic_DNA"/>
</dbReference>
<dbReference type="EMBL" id="CP002687">
    <property type="protein sequence ID" value="ANM67770.1"/>
    <property type="molecule type" value="Genomic_DNA"/>
</dbReference>
<dbReference type="EMBL" id="CP002687">
    <property type="protein sequence ID" value="ANM67771.1"/>
    <property type="molecule type" value="Genomic_DNA"/>
</dbReference>
<dbReference type="PIR" id="E71410">
    <property type="entry name" value="E71410"/>
</dbReference>
<dbReference type="RefSeq" id="NP_001329577.1">
    <property type="nucleotide sequence ID" value="NM_001340969.1"/>
</dbReference>
<dbReference type="RefSeq" id="NP_001329578.1">
    <property type="nucleotide sequence ID" value="NM_001340968.1"/>
</dbReference>
<dbReference type="RefSeq" id="NP_001329579.1">
    <property type="nucleotide sequence ID" value="NM_001340967.1"/>
</dbReference>
<dbReference type="RefSeq" id="NP_193212.4">
    <property type="nucleotide sequence ID" value="NM_117561.6"/>
</dbReference>
<dbReference type="SMR" id="F4JIF4"/>
<dbReference type="FunCoup" id="F4JIF4">
    <property type="interactions" value="471"/>
</dbReference>
<dbReference type="STRING" id="3702.F4JIF4"/>
<dbReference type="iPTMnet" id="F4JIF4"/>
<dbReference type="PaxDb" id="3702-AT4G14760.1"/>
<dbReference type="ProteomicsDB" id="249377"/>
<dbReference type="EnsemblPlants" id="AT4G14760.1">
    <property type="protein sequence ID" value="AT4G14760.1"/>
    <property type="gene ID" value="AT4G14760"/>
</dbReference>
<dbReference type="EnsemblPlants" id="AT4G14760.2">
    <property type="protein sequence ID" value="AT4G14760.2"/>
    <property type="gene ID" value="AT4G14760"/>
</dbReference>
<dbReference type="EnsemblPlants" id="AT4G14760.3">
    <property type="protein sequence ID" value="AT4G14760.3"/>
    <property type="gene ID" value="AT4G14760"/>
</dbReference>
<dbReference type="EnsemblPlants" id="AT4G14760.4">
    <property type="protein sequence ID" value="AT4G14760.4"/>
    <property type="gene ID" value="AT4G14760"/>
</dbReference>
<dbReference type="GeneID" id="827131"/>
<dbReference type="Gramene" id="AT4G14760.1">
    <property type="protein sequence ID" value="AT4G14760.1"/>
    <property type="gene ID" value="AT4G14760"/>
</dbReference>
<dbReference type="Gramene" id="AT4G14760.2">
    <property type="protein sequence ID" value="AT4G14760.2"/>
    <property type="gene ID" value="AT4G14760"/>
</dbReference>
<dbReference type="Gramene" id="AT4G14760.3">
    <property type="protein sequence ID" value="AT4G14760.3"/>
    <property type="gene ID" value="AT4G14760"/>
</dbReference>
<dbReference type="Gramene" id="AT4G14760.4">
    <property type="protein sequence ID" value="AT4G14760.4"/>
    <property type="gene ID" value="AT4G14760"/>
</dbReference>
<dbReference type="KEGG" id="ath:AT4G14760"/>
<dbReference type="Araport" id="AT4G14760"/>
<dbReference type="TAIR" id="AT4G14760">
    <property type="gene designation" value="NET1B"/>
</dbReference>
<dbReference type="eggNOG" id="ENOG502QQ6M">
    <property type="taxonomic scope" value="Eukaryota"/>
</dbReference>
<dbReference type="HOGENOM" id="CLU_001229_1_1_1"/>
<dbReference type="InParanoid" id="F4JIF4"/>
<dbReference type="OMA" id="HLQYKQC"/>
<dbReference type="PRO" id="PR:F4JIF4"/>
<dbReference type="Proteomes" id="UP000006548">
    <property type="component" value="Chromosome 4"/>
</dbReference>
<dbReference type="ExpressionAtlas" id="F4JIF4">
    <property type="expression patterns" value="baseline and differential"/>
</dbReference>
<dbReference type="GO" id="GO:0016020">
    <property type="term" value="C:membrane"/>
    <property type="evidence" value="ECO:0007669"/>
    <property type="project" value="UniProtKB-ARBA"/>
</dbReference>
<dbReference type="GO" id="GO:0005634">
    <property type="term" value="C:nucleus"/>
    <property type="evidence" value="ECO:0007005"/>
    <property type="project" value="TAIR"/>
</dbReference>
<dbReference type="GO" id="GO:0003779">
    <property type="term" value="F:actin binding"/>
    <property type="evidence" value="ECO:0007669"/>
    <property type="project" value="InterPro"/>
</dbReference>
<dbReference type="Gene3D" id="1.10.287.1490">
    <property type="match status" value="1"/>
</dbReference>
<dbReference type="Gene3D" id="1.20.5.340">
    <property type="match status" value="1"/>
</dbReference>
<dbReference type="InterPro" id="IPR011684">
    <property type="entry name" value="NAB"/>
</dbReference>
<dbReference type="InterPro" id="IPR051861">
    <property type="entry name" value="NET_actin-binding_domain"/>
</dbReference>
<dbReference type="PANTHER" id="PTHR32258:SF6">
    <property type="entry name" value="PROTEIN NETWORKED 1A"/>
    <property type="match status" value="1"/>
</dbReference>
<dbReference type="PANTHER" id="PTHR32258">
    <property type="entry name" value="PROTEIN NETWORKED 4A"/>
    <property type="match status" value="1"/>
</dbReference>
<dbReference type="Pfam" id="PF07765">
    <property type="entry name" value="KIP1"/>
    <property type="match status" value="1"/>
</dbReference>
<dbReference type="PROSITE" id="PS51774">
    <property type="entry name" value="NAB"/>
    <property type="match status" value="1"/>
</dbReference>
<sequence length="1710" mass="196978">MASLSQSESGRLYSWWWDSHIPKNSKWIQDNLADMDSKVKTMIKLIEADADSFARRADMYFKKRPELMKLVEELYRAYRALAERYDHTTVELRRAHKVMVEAFPNQMSFDMIEDSASSSSEPRTEADTEALQKDGTKSKRSFSQMNKLDGTSDSHEADSEVETLKRTLLELQTEKEALNLQYQLILSKVSRFEKELNDAQKDVKGFDERACKADIEIKILKESLAKLEVERDTGLLQYSQAIERIADLEASISHGQEYAKGLTNRVSEAEREAMSLKKELSRLQSEKEAGLLRYNKSLELISSLEKTIRDAEESVRVFRDQSEQAETEIKALKQELLKLNEVNEDLNVRYQQCLETISKLEREVSHAQDNAKRLSSEVLAGAAKIKTVEEQCALLESFNQTMKVEAENLAHKMSAKDQELSQKQNEIEKLQAVMQEEQLRFSELGASLRNLESLHSQSQEEQKVLTSELHSRIQMLRELEMRNSKLEGDISSKEENRNLSEINDTSISLEIQKNEISCLKKMKEKLEEEVAKQMNQSSALQVEIHCVKGNIDSMNRRYQKLIDQVSLTGFDPESLSYSVKKLQDENSKLVELCTNQRDENNAVTGKLCEMDSILKRNADLEKLLLESNTKLDGSREKAKDLIERCESLRGEKSELAAERANLVSQLQIMTANMQTLLEKNSVLEKSLSCANIELESLRDKSKCFDDFFQFLKNDKSELMKERESLVSQLCKVEEKLGVLEKKYTELEVRYTDLQRDNKLKSHQVEELQVSLAAEKQESANYKRSTESRLADLQKNVSFLREECRSRKREYEDELDRVVNKQVEIFILQKLIEDLEQKNFSLLIECQKHVEASEFSEKLIAELESENLEQQMEAEIFLDEIDSLRGAIYQVIKALQVEADCKTEQKITKDQISVSRALGEIDSLKGSLSSAEYEMHRLVVENSVLLSLLGQFQSDGLVLESEKNILEKDLKTKIHQCGMLEKDKQDLQEANRLLKSKLIKREQQEQKLRAELKFENLKFESLHDSYMVLQQDYSYTLNDNKTLLLKFSEFKDGMHVVEEENDAILQEAVALSNTCVVYRSFGSEMAEEVEDFVETVSSLREISTGLKRKVETLEKKLEGKEKESQGLNKMLENLQEGLEEDNFLTGLLEHQVSNVDEILEHREMEILEAEHMLKATNNENEELHKEVEELRKDYEDSRRMRANLEWQISELSDVAGRQEEEIRKLNALNENLESEVQFLNKEIQRQQVREEYLSLELQEKSNEIGLWDSAATSFYFDLQVSAIRELILENKVNELSGVCENLNDEVVTKTTKIKQMKETVGFLESQVTELKSQLSAYDPVIASLAGDVKALEKSTHALTKFPATAYQQRVGNNLEESGSTTSPCNGIVILKEINPSIKTIEQAFVKEKGRLSRQITRSTSQKRRDRRKIENIQPDDQVTGESRQPRLRPEMTEVKNELLMKDNPRDQVTDSLTYGRSQGTSHGSNDMFEFWDESAESETSVNFLINSNKPQRSLNSNLRHQSRNPSIESDKAVGVVDKLELSRNIEDKAKILERLLSDSRRLSSLRISLTDLKRKLEMNEKQRRFSNADLVIVKRQLKEMEEAVSQLENTNEILSKEIEETGDARDIYRKVVVEKSRSGSEKIEQLQNKMQNIEQTVLKLEDGTKSKGRKMFSETRTVILLRDIIHKGGKRSARKKKNRFCGCIRSSTKEE</sequence>
<keyword id="KW-0175">Coiled coil</keyword>
<keyword id="KW-1185">Reference proteome</keyword>
<gene>
    <name evidence="5" type="primary">NET1B</name>
    <name evidence="8" type="ordered locus">At4g14760</name>
    <name evidence="9" type="ORF">dl3420w</name>
</gene>